<gene>
    <name evidence="1" type="primary">crl</name>
    <name type="ordered locus">EcE24377A_0272</name>
</gene>
<name>CRL_ECO24</name>
<comment type="function">
    <text evidence="1">Binds to the sigma-S subunit of RNA polymerase, activating expression of sigma-S-regulated genes. Stimulates RNA polymerase holoenzyme formation and may bind to several other sigma factors, such as sigma-70 and sigma-32.</text>
</comment>
<comment type="subcellular location">
    <subcellularLocation>
        <location evidence="1">Cytoplasm</location>
    </subcellularLocation>
</comment>
<comment type="similarity">
    <text evidence="1">Belongs to the Crl family.</text>
</comment>
<proteinExistence type="inferred from homology"/>
<organism>
    <name type="scientific">Escherichia coli O139:H28 (strain E24377A / ETEC)</name>
    <dbReference type="NCBI Taxonomy" id="331111"/>
    <lineage>
        <taxon>Bacteria</taxon>
        <taxon>Pseudomonadati</taxon>
        <taxon>Pseudomonadota</taxon>
        <taxon>Gammaproteobacteria</taxon>
        <taxon>Enterobacterales</taxon>
        <taxon>Enterobacteriaceae</taxon>
        <taxon>Escherichia</taxon>
    </lineage>
</organism>
<feature type="chain" id="PRO_1000065784" description="Sigma factor-binding protein Crl">
    <location>
        <begin position="1"/>
        <end position="133"/>
    </location>
</feature>
<feature type="region of interest" description="Essential for activity" evidence="1">
    <location>
        <begin position="99"/>
        <end position="122"/>
    </location>
</feature>
<feature type="coiled-coil region" evidence="1">
    <location>
        <begin position="90"/>
        <end position="116"/>
    </location>
</feature>
<accession>A7ZHZ9</accession>
<reference key="1">
    <citation type="journal article" date="2008" name="J. Bacteriol.">
        <title>The pangenome structure of Escherichia coli: comparative genomic analysis of E. coli commensal and pathogenic isolates.</title>
        <authorList>
            <person name="Rasko D.A."/>
            <person name="Rosovitz M.J."/>
            <person name="Myers G.S.A."/>
            <person name="Mongodin E.F."/>
            <person name="Fricke W.F."/>
            <person name="Gajer P."/>
            <person name="Crabtree J."/>
            <person name="Sebaihia M."/>
            <person name="Thomson N.R."/>
            <person name="Chaudhuri R."/>
            <person name="Henderson I.R."/>
            <person name="Sperandio V."/>
            <person name="Ravel J."/>
        </authorList>
    </citation>
    <scope>NUCLEOTIDE SEQUENCE [LARGE SCALE GENOMIC DNA]</scope>
    <source>
        <strain>E24377A / ETEC</strain>
    </source>
</reference>
<evidence type="ECO:0000255" key="1">
    <source>
        <dbReference type="HAMAP-Rule" id="MF_01178"/>
    </source>
</evidence>
<protein>
    <recommendedName>
        <fullName evidence="1">Sigma factor-binding protein Crl</fullName>
    </recommendedName>
</protein>
<keyword id="KW-0010">Activator</keyword>
<keyword id="KW-0175">Coiled coil</keyword>
<keyword id="KW-0963">Cytoplasm</keyword>
<keyword id="KW-1185">Reference proteome</keyword>
<keyword id="KW-0804">Transcription</keyword>
<keyword id="KW-0805">Transcription regulation</keyword>
<sequence length="133" mass="15656">MTLPSGHPKSRLIKKFTALGPYIREGKCEDNRFFFDCLAVCVNVKPAPEVREFWGWWMELEAQESRFTYSYQFGLFDKAGDWKSVPVKDTEVVERLEHTLREFHEKLRELLTTLNLKLEPADDFRDEPVKLTA</sequence>
<dbReference type="EMBL" id="CP000800">
    <property type="protein sequence ID" value="ABV16827.1"/>
    <property type="molecule type" value="Genomic_DNA"/>
</dbReference>
<dbReference type="RefSeq" id="WP_000174677.1">
    <property type="nucleotide sequence ID" value="NC_009801.1"/>
</dbReference>
<dbReference type="SMR" id="A7ZHZ9"/>
<dbReference type="GeneID" id="93777153"/>
<dbReference type="KEGG" id="ecw:EcE24377A_0272"/>
<dbReference type="HOGENOM" id="CLU_136773_0_0_6"/>
<dbReference type="Proteomes" id="UP000001122">
    <property type="component" value="Chromosome"/>
</dbReference>
<dbReference type="GO" id="GO:0005737">
    <property type="term" value="C:cytoplasm"/>
    <property type="evidence" value="ECO:0007669"/>
    <property type="project" value="UniProtKB-SubCell"/>
</dbReference>
<dbReference type="GO" id="GO:0045893">
    <property type="term" value="P:positive regulation of DNA-templated transcription"/>
    <property type="evidence" value="ECO:0007669"/>
    <property type="project" value="UniProtKB-UniRule"/>
</dbReference>
<dbReference type="FunFam" id="3.30.310.230:FF:000001">
    <property type="entry name" value="Sigma factor-binding protein Crl"/>
    <property type="match status" value="1"/>
</dbReference>
<dbReference type="Gene3D" id="3.30.310.230">
    <property type="entry name" value="Sigma factor-binding protein Crl monomer"/>
    <property type="match status" value="1"/>
</dbReference>
<dbReference type="HAMAP" id="MF_01178">
    <property type="entry name" value="Crl"/>
    <property type="match status" value="1"/>
</dbReference>
<dbReference type="InterPro" id="IPR009986">
    <property type="entry name" value="Tscrpt_reg_Crl"/>
</dbReference>
<dbReference type="InterPro" id="IPR038208">
    <property type="entry name" value="Tscrpt_reg_Crl_sf"/>
</dbReference>
<dbReference type="NCBIfam" id="NF008217">
    <property type="entry name" value="PRK10984.1"/>
    <property type="match status" value="1"/>
</dbReference>
<dbReference type="Pfam" id="PF07417">
    <property type="entry name" value="Crl"/>
    <property type="match status" value="1"/>
</dbReference>